<name>MYF5_XENLA</name>
<gene>
    <name type="primary">myf5</name>
</gene>
<evidence type="ECO:0000250" key="1"/>
<evidence type="ECO:0000255" key="2">
    <source>
        <dbReference type="PROSITE-ProRule" id="PRU00981"/>
    </source>
</evidence>
<evidence type="ECO:0000256" key="3">
    <source>
        <dbReference type="SAM" id="MobiDB-lite"/>
    </source>
</evidence>
<feature type="chain" id="PRO_0000127349" description="Myogenic factor 5">
    <location>
        <begin position="1"/>
        <end position="255"/>
    </location>
</feature>
<feature type="domain" description="bHLH" evidence="2">
    <location>
        <begin position="83"/>
        <end position="134"/>
    </location>
</feature>
<feature type="region of interest" description="Disordered" evidence="3">
    <location>
        <begin position="221"/>
        <end position="246"/>
    </location>
</feature>
<feature type="compositionally biased region" description="Low complexity" evidence="3">
    <location>
        <begin position="221"/>
        <end position="242"/>
    </location>
</feature>
<dbReference type="EMBL" id="X56738">
    <property type="protein sequence ID" value="CAA40062.1"/>
    <property type="molecule type" value="mRNA"/>
</dbReference>
<dbReference type="PIR" id="S16151">
    <property type="entry name" value="S16151"/>
</dbReference>
<dbReference type="RefSeq" id="NP_001095249.1">
    <property type="nucleotide sequence ID" value="NM_001101779.2"/>
</dbReference>
<dbReference type="SMR" id="P24700"/>
<dbReference type="GeneID" id="397960"/>
<dbReference type="KEGG" id="xla:397960"/>
<dbReference type="AGR" id="Xenbase:XB-GENE-866267"/>
<dbReference type="CTD" id="397960"/>
<dbReference type="Xenbase" id="XB-GENE-866267">
    <property type="gene designation" value="myf5.L"/>
</dbReference>
<dbReference type="OrthoDB" id="10049614at2759"/>
<dbReference type="Proteomes" id="UP000186698">
    <property type="component" value="Chromosome 3L"/>
</dbReference>
<dbReference type="Bgee" id="397960">
    <property type="expression patterns" value="Expressed in neurula embryo and 2 other cell types or tissues"/>
</dbReference>
<dbReference type="GO" id="GO:0005634">
    <property type="term" value="C:nucleus"/>
    <property type="evidence" value="ECO:0007669"/>
    <property type="project" value="UniProtKB-SubCell"/>
</dbReference>
<dbReference type="GO" id="GO:0000981">
    <property type="term" value="F:DNA-binding transcription factor activity, RNA polymerase II-specific"/>
    <property type="evidence" value="ECO:0000318"/>
    <property type="project" value="GO_Central"/>
</dbReference>
<dbReference type="GO" id="GO:0046983">
    <property type="term" value="F:protein dimerization activity"/>
    <property type="evidence" value="ECO:0007669"/>
    <property type="project" value="InterPro"/>
</dbReference>
<dbReference type="GO" id="GO:0000978">
    <property type="term" value="F:RNA polymerase II cis-regulatory region sequence-specific DNA binding"/>
    <property type="evidence" value="ECO:0000318"/>
    <property type="project" value="GO_Central"/>
</dbReference>
<dbReference type="GO" id="GO:0045663">
    <property type="term" value="P:positive regulation of myoblast differentiation"/>
    <property type="evidence" value="ECO:0000318"/>
    <property type="project" value="GO_Central"/>
</dbReference>
<dbReference type="GO" id="GO:0048743">
    <property type="term" value="P:positive regulation of skeletal muscle fiber development"/>
    <property type="evidence" value="ECO:0000318"/>
    <property type="project" value="GO_Central"/>
</dbReference>
<dbReference type="GO" id="GO:0006357">
    <property type="term" value="P:regulation of transcription by RNA polymerase II"/>
    <property type="evidence" value="ECO:0000318"/>
    <property type="project" value="GO_Central"/>
</dbReference>
<dbReference type="GO" id="GO:0035914">
    <property type="term" value="P:skeletal muscle cell differentiation"/>
    <property type="evidence" value="ECO:0000318"/>
    <property type="project" value="GO_Central"/>
</dbReference>
<dbReference type="CDD" id="cd18937">
    <property type="entry name" value="bHLH_TS_Myf5"/>
    <property type="match status" value="1"/>
</dbReference>
<dbReference type="FunFam" id="4.10.280.10:FF:000005">
    <property type="entry name" value="Myogenic factor"/>
    <property type="match status" value="1"/>
</dbReference>
<dbReference type="Gene3D" id="4.10.280.10">
    <property type="entry name" value="Helix-loop-helix DNA-binding domain"/>
    <property type="match status" value="1"/>
</dbReference>
<dbReference type="InterPro" id="IPR011598">
    <property type="entry name" value="bHLH_dom"/>
</dbReference>
<dbReference type="InterPro" id="IPR036638">
    <property type="entry name" value="HLH_DNA-bd_sf"/>
</dbReference>
<dbReference type="InterPro" id="IPR022032">
    <property type="entry name" value="Myf5"/>
</dbReference>
<dbReference type="InterPro" id="IPR002546">
    <property type="entry name" value="MyoD_N"/>
</dbReference>
<dbReference type="InterPro" id="IPR039704">
    <property type="entry name" value="Myogenic_factor"/>
</dbReference>
<dbReference type="PANTHER" id="PTHR11534">
    <property type="entry name" value="MYOGENIC FACTOR"/>
    <property type="match status" value="1"/>
</dbReference>
<dbReference type="PANTHER" id="PTHR11534:SF3">
    <property type="entry name" value="MYOGENIC FACTOR 5"/>
    <property type="match status" value="1"/>
</dbReference>
<dbReference type="Pfam" id="PF01586">
    <property type="entry name" value="Basic"/>
    <property type="match status" value="1"/>
</dbReference>
<dbReference type="Pfam" id="PF00010">
    <property type="entry name" value="HLH"/>
    <property type="match status" value="1"/>
</dbReference>
<dbReference type="Pfam" id="PF12232">
    <property type="entry name" value="Myf5"/>
    <property type="match status" value="1"/>
</dbReference>
<dbReference type="SMART" id="SM00520">
    <property type="entry name" value="BASIC"/>
    <property type="match status" value="1"/>
</dbReference>
<dbReference type="SMART" id="SM00353">
    <property type="entry name" value="HLH"/>
    <property type="match status" value="1"/>
</dbReference>
<dbReference type="SUPFAM" id="SSF47459">
    <property type="entry name" value="HLH, helix-loop-helix DNA-binding domain"/>
    <property type="match status" value="1"/>
</dbReference>
<dbReference type="PROSITE" id="PS50888">
    <property type="entry name" value="BHLH"/>
    <property type="match status" value="1"/>
</dbReference>
<reference key="1">
    <citation type="journal article" date="1991" name="Development">
        <title>Xenopus Myf-5 marks early muscle cells and can activate muscle genes ectopically in early embryos.</title>
        <authorList>
            <person name="Hopwood N.D."/>
            <person name="Pluck A."/>
            <person name="Gurdon J.B."/>
        </authorList>
    </citation>
    <scope>NUCLEOTIDE SEQUENCE [MRNA]</scope>
</reference>
<accession>P24700</accession>
<organism>
    <name type="scientific">Xenopus laevis</name>
    <name type="common">African clawed frog</name>
    <dbReference type="NCBI Taxonomy" id="8355"/>
    <lineage>
        <taxon>Eukaryota</taxon>
        <taxon>Metazoa</taxon>
        <taxon>Chordata</taxon>
        <taxon>Craniata</taxon>
        <taxon>Vertebrata</taxon>
        <taxon>Euteleostomi</taxon>
        <taxon>Amphibia</taxon>
        <taxon>Batrachia</taxon>
        <taxon>Anura</taxon>
        <taxon>Pipoidea</taxon>
        <taxon>Pipidae</taxon>
        <taxon>Xenopodinae</taxon>
        <taxon>Xenopus</taxon>
        <taxon>Xenopus</taxon>
    </lineage>
</organism>
<protein>
    <recommendedName>
        <fullName>Myogenic factor 5</fullName>
        <shortName>Myf-5</shortName>
    </recommendedName>
</protein>
<comment type="function">
    <text evidence="1">Acts as a transcriptional activator that promotes transcription of muscle-specific target genes and plays a role in muscle differentiation. Induces fibroblasts to differentiate into myoblasts. Probable sequence specific DNA-binding protein (By similarity).</text>
</comment>
<comment type="subunit">
    <text>Efficient DNA binding requires dimerization with another bHLH protein.</text>
</comment>
<comment type="subcellular location">
    <subcellularLocation>
        <location>Nucleus</location>
    </subcellularLocation>
</comment>
<keyword id="KW-0010">Activator</keyword>
<keyword id="KW-0217">Developmental protein</keyword>
<keyword id="KW-0221">Differentiation</keyword>
<keyword id="KW-0238">DNA-binding</keyword>
<keyword id="KW-0517">Myogenesis</keyword>
<keyword id="KW-0539">Nucleus</keyword>
<keyword id="KW-1185">Reference proteome</keyword>
<keyword id="KW-0804">Transcription</keyword>
<keyword id="KW-0805">Transcription regulation</keyword>
<proteinExistence type="evidence at transcript level"/>
<sequence>MEMVDSCHFSPSEFFYDSSCIPSPEEGYTEDYEHGMSIYGAHKKDLEESDEDEHVRAPIGHHQAGNCLMWACKACKRKSSTTDRRKAATMRERRRLKKVNQAFETLKRCTTTNPNQRLPKVEILRNAIQYIESLQDLLREQVENYYSLPGQSCTEPGSPMSSCSDGMSDCSSPQWSGRNSSFDNVYCSDLQTSFSSTKLTLSSLDCLSSIVDRISSPQQCSLPIPDSITPSPTSSTDSLPRSPDAHDCRPIYHVL</sequence>